<name>LIPB_PROMT</name>
<keyword id="KW-0012">Acyltransferase</keyword>
<keyword id="KW-0963">Cytoplasm</keyword>
<keyword id="KW-1185">Reference proteome</keyword>
<keyword id="KW-0808">Transferase</keyword>
<gene>
    <name evidence="1" type="primary">lipB</name>
    <name type="ordered locus">PMN2A_1736</name>
</gene>
<feature type="chain" id="PRO_0000242743" description="Octanoyltransferase">
    <location>
        <begin position="1"/>
        <end position="239"/>
    </location>
</feature>
<feature type="domain" description="BPL/LPL catalytic" evidence="2">
    <location>
        <begin position="59"/>
        <end position="239"/>
    </location>
</feature>
<feature type="active site" description="Acyl-thioester intermediate" evidence="1">
    <location>
        <position position="199"/>
    </location>
</feature>
<feature type="binding site" evidence="1">
    <location>
        <begin position="101"/>
        <end position="108"/>
    </location>
    <ligand>
        <name>substrate</name>
    </ligand>
</feature>
<feature type="binding site" evidence="1">
    <location>
        <begin position="168"/>
        <end position="170"/>
    </location>
    <ligand>
        <name>substrate</name>
    </ligand>
</feature>
<feature type="binding site" evidence="1">
    <location>
        <begin position="181"/>
        <end position="183"/>
    </location>
    <ligand>
        <name>substrate</name>
    </ligand>
</feature>
<feature type="site" description="Lowers pKa of active site Cys" evidence="1">
    <location>
        <position position="165"/>
    </location>
</feature>
<reference key="1">
    <citation type="journal article" date="2007" name="PLoS Genet.">
        <title>Patterns and implications of gene gain and loss in the evolution of Prochlorococcus.</title>
        <authorList>
            <person name="Kettler G.C."/>
            <person name="Martiny A.C."/>
            <person name="Huang K."/>
            <person name="Zucker J."/>
            <person name="Coleman M.L."/>
            <person name="Rodrigue S."/>
            <person name="Chen F."/>
            <person name="Lapidus A."/>
            <person name="Ferriera S."/>
            <person name="Johnson J."/>
            <person name="Steglich C."/>
            <person name="Church G.M."/>
            <person name="Richardson P."/>
            <person name="Chisholm S.W."/>
        </authorList>
    </citation>
    <scope>NUCLEOTIDE SEQUENCE [LARGE SCALE GENOMIC DNA]</scope>
    <source>
        <strain>NATL2A</strain>
    </source>
</reference>
<proteinExistence type="inferred from homology"/>
<protein>
    <recommendedName>
        <fullName evidence="1">Octanoyltransferase</fullName>
        <ecNumber evidence="1">2.3.1.181</ecNumber>
    </recommendedName>
    <alternativeName>
        <fullName evidence="1">Lipoate-protein ligase B</fullName>
    </alternativeName>
    <alternativeName>
        <fullName evidence="1">Lipoyl/octanoyl transferase</fullName>
    </alternativeName>
    <alternativeName>
        <fullName evidence="1">Octanoyl-[acyl-carrier-protein]-protein N-octanoyltransferase</fullName>
    </alternativeName>
</protein>
<dbReference type="EC" id="2.3.1.181" evidence="1"/>
<dbReference type="EMBL" id="CP000095">
    <property type="protein sequence ID" value="AAZ59224.1"/>
    <property type="molecule type" value="Genomic_DNA"/>
</dbReference>
<dbReference type="RefSeq" id="WP_011294369.1">
    <property type="nucleotide sequence ID" value="NC_007335.2"/>
</dbReference>
<dbReference type="SMR" id="Q46H10"/>
<dbReference type="STRING" id="59920.PMN2A_1736"/>
<dbReference type="KEGG" id="pmn:PMN2A_1736"/>
<dbReference type="HOGENOM" id="CLU_035168_1_0_3"/>
<dbReference type="OrthoDB" id="9787061at2"/>
<dbReference type="PhylomeDB" id="Q46H10"/>
<dbReference type="UniPathway" id="UPA00538">
    <property type="reaction ID" value="UER00592"/>
</dbReference>
<dbReference type="Proteomes" id="UP000002535">
    <property type="component" value="Chromosome"/>
</dbReference>
<dbReference type="GO" id="GO:0005737">
    <property type="term" value="C:cytoplasm"/>
    <property type="evidence" value="ECO:0007669"/>
    <property type="project" value="UniProtKB-SubCell"/>
</dbReference>
<dbReference type="GO" id="GO:0033819">
    <property type="term" value="F:lipoyl(octanoyl) transferase activity"/>
    <property type="evidence" value="ECO:0007669"/>
    <property type="project" value="UniProtKB-EC"/>
</dbReference>
<dbReference type="GO" id="GO:0036211">
    <property type="term" value="P:protein modification process"/>
    <property type="evidence" value="ECO:0007669"/>
    <property type="project" value="InterPro"/>
</dbReference>
<dbReference type="CDD" id="cd16444">
    <property type="entry name" value="LipB"/>
    <property type="match status" value="1"/>
</dbReference>
<dbReference type="Gene3D" id="3.30.930.10">
    <property type="entry name" value="Bira Bifunctional Protein, Domain 2"/>
    <property type="match status" value="1"/>
</dbReference>
<dbReference type="HAMAP" id="MF_00013">
    <property type="entry name" value="LipB"/>
    <property type="match status" value="1"/>
</dbReference>
<dbReference type="InterPro" id="IPR045864">
    <property type="entry name" value="aa-tRNA-synth_II/BPL/LPL"/>
</dbReference>
<dbReference type="InterPro" id="IPR004143">
    <property type="entry name" value="BPL_LPL_catalytic"/>
</dbReference>
<dbReference type="InterPro" id="IPR000544">
    <property type="entry name" value="Octanoyltransferase"/>
</dbReference>
<dbReference type="InterPro" id="IPR020605">
    <property type="entry name" value="Octanoyltransferase_CS"/>
</dbReference>
<dbReference type="NCBIfam" id="TIGR00214">
    <property type="entry name" value="lipB"/>
    <property type="match status" value="1"/>
</dbReference>
<dbReference type="PANTHER" id="PTHR10993:SF7">
    <property type="entry name" value="LIPOYLTRANSFERASE 2, MITOCHONDRIAL-RELATED"/>
    <property type="match status" value="1"/>
</dbReference>
<dbReference type="PANTHER" id="PTHR10993">
    <property type="entry name" value="OCTANOYLTRANSFERASE"/>
    <property type="match status" value="1"/>
</dbReference>
<dbReference type="Pfam" id="PF21948">
    <property type="entry name" value="LplA-B_cat"/>
    <property type="match status" value="1"/>
</dbReference>
<dbReference type="SUPFAM" id="SSF55681">
    <property type="entry name" value="Class II aaRS and biotin synthetases"/>
    <property type="match status" value="1"/>
</dbReference>
<dbReference type="PROSITE" id="PS51733">
    <property type="entry name" value="BPL_LPL_CATALYTIC"/>
    <property type="match status" value="1"/>
</dbReference>
<dbReference type="PROSITE" id="PS01313">
    <property type="entry name" value="LIPB"/>
    <property type="match status" value="1"/>
</dbReference>
<accession>Q46H10</accession>
<comment type="function">
    <text evidence="1">Catalyzes the transfer of endogenously produced octanoic acid from octanoyl-acyl-carrier-protein onto the lipoyl domains of lipoate-dependent enzymes. Lipoyl-ACP can also act as a substrate although octanoyl-ACP is likely to be the physiological substrate.</text>
</comment>
<comment type="catalytic activity">
    <reaction evidence="1">
        <text>octanoyl-[ACP] + L-lysyl-[protein] = N(6)-octanoyl-L-lysyl-[protein] + holo-[ACP] + H(+)</text>
        <dbReference type="Rhea" id="RHEA:17665"/>
        <dbReference type="Rhea" id="RHEA-COMP:9636"/>
        <dbReference type="Rhea" id="RHEA-COMP:9685"/>
        <dbReference type="Rhea" id="RHEA-COMP:9752"/>
        <dbReference type="Rhea" id="RHEA-COMP:9928"/>
        <dbReference type="ChEBI" id="CHEBI:15378"/>
        <dbReference type="ChEBI" id="CHEBI:29969"/>
        <dbReference type="ChEBI" id="CHEBI:64479"/>
        <dbReference type="ChEBI" id="CHEBI:78463"/>
        <dbReference type="ChEBI" id="CHEBI:78809"/>
        <dbReference type="EC" id="2.3.1.181"/>
    </reaction>
</comment>
<comment type="pathway">
    <text evidence="1">Protein modification; protein lipoylation via endogenous pathway; protein N(6)-(lipoyl)lysine from octanoyl-[acyl-carrier-protein]: step 1/2.</text>
</comment>
<comment type="subcellular location">
    <subcellularLocation>
        <location evidence="1">Cytoplasm</location>
    </subcellularLocation>
</comment>
<comment type="miscellaneous">
    <text evidence="1">In the reaction, the free carboxyl group of octanoic acid is attached via an amide linkage to the epsilon-amino group of a specific lysine residue of lipoyl domains of lipoate-dependent enzymes.</text>
</comment>
<comment type="similarity">
    <text evidence="1">Belongs to the LipB family.</text>
</comment>
<evidence type="ECO:0000255" key="1">
    <source>
        <dbReference type="HAMAP-Rule" id="MF_00013"/>
    </source>
</evidence>
<evidence type="ECO:0000255" key="2">
    <source>
        <dbReference type="PROSITE-ProRule" id="PRU01067"/>
    </source>
</evidence>
<sequence length="239" mass="27078">MDKKLHFVSPETGPNSNLDLTPQLAQSSSAFLFEPKNIVPFETALGWQKNFQKNLIEQPFSPQAVWLLEHFSCFTMGRGSDKKNLLFEENNSPLPVFSIERGGEVTHHMPGQIVGYLVLNLSLHKKDLSWYLRELEQVLIDVLDLLGMEGKRVDGLTGVWCEDKKVGSIGIGCKRWVTQHGFSLNVDCDLIGFEKIIPCGLDKVKVGKLSDWIPGIKVCDVTPLLRESVKRRFKLNWEK</sequence>
<organism>
    <name type="scientific">Prochlorococcus marinus (strain NATL2A)</name>
    <dbReference type="NCBI Taxonomy" id="59920"/>
    <lineage>
        <taxon>Bacteria</taxon>
        <taxon>Bacillati</taxon>
        <taxon>Cyanobacteriota</taxon>
        <taxon>Cyanophyceae</taxon>
        <taxon>Synechococcales</taxon>
        <taxon>Prochlorococcaceae</taxon>
        <taxon>Prochlorococcus</taxon>
    </lineage>
</organism>